<name>RL27_RUBXD</name>
<accession>Q1AVU2</accession>
<reference key="1">
    <citation type="submission" date="2006-06" db="EMBL/GenBank/DDBJ databases">
        <title>Complete sequence of Rubrobacter xylanophilus DSM 9941.</title>
        <authorList>
            <consortium name="US DOE Joint Genome Institute"/>
            <person name="Copeland A."/>
            <person name="Lucas S."/>
            <person name="Lapidus A."/>
            <person name="Barry K."/>
            <person name="Detter J.C."/>
            <person name="Glavina del Rio T."/>
            <person name="Hammon N."/>
            <person name="Israni S."/>
            <person name="Dalin E."/>
            <person name="Tice H."/>
            <person name="Pitluck S."/>
            <person name="Munk A.C."/>
            <person name="Brettin T."/>
            <person name="Bruce D."/>
            <person name="Han C."/>
            <person name="Tapia R."/>
            <person name="Gilna P."/>
            <person name="Schmutz J."/>
            <person name="Larimer F."/>
            <person name="Land M."/>
            <person name="Hauser L."/>
            <person name="Kyrpides N."/>
            <person name="Lykidis A."/>
            <person name="da Costa M.S."/>
            <person name="Rainey F.A."/>
            <person name="Empadinhas N."/>
            <person name="Jolivet E."/>
            <person name="Battista J.R."/>
            <person name="Richardson P."/>
        </authorList>
    </citation>
    <scope>NUCLEOTIDE SEQUENCE [LARGE SCALE GENOMIC DNA]</scope>
    <source>
        <strain>DSM 9941 / JCM 11954 / NBRC 16129 / PRD-1</strain>
    </source>
</reference>
<feature type="chain" id="PRO_1000017590" description="Large ribosomal subunit protein bL27">
    <location>
        <begin position="1"/>
        <end position="86"/>
    </location>
</feature>
<feature type="region of interest" description="Disordered" evidence="2">
    <location>
        <begin position="1"/>
        <end position="21"/>
    </location>
</feature>
<protein>
    <recommendedName>
        <fullName evidence="1">Large ribosomal subunit protein bL27</fullName>
    </recommendedName>
    <alternativeName>
        <fullName evidence="3">50S ribosomal protein L27</fullName>
    </alternativeName>
</protein>
<keyword id="KW-1185">Reference proteome</keyword>
<keyword id="KW-0687">Ribonucleoprotein</keyword>
<keyword id="KW-0689">Ribosomal protein</keyword>
<comment type="similarity">
    <text evidence="1">Belongs to the bacterial ribosomal protein bL27 family.</text>
</comment>
<gene>
    <name evidence="1" type="primary">rpmA</name>
    <name type="ordered locus">Rxyl_1524</name>
</gene>
<proteinExistence type="inferred from homology"/>
<organism>
    <name type="scientific">Rubrobacter xylanophilus (strain DSM 9941 / JCM 11954 / NBRC 16129 / PRD-1)</name>
    <dbReference type="NCBI Taxonomy" id="266117"/>
    <lineage>
        <taxon>Bacteria</taxon>
        <taxon>Bacillati</taxon>
        <taxon>Actinomycetota</taxon>
        <taxon>Rubrobacteria</taxon>
        <taxon>Rubrobacterales</taxon>
        <taxon>Rubrobacteraceae</taxon>
        <taxon>Rubrobacter</taxon>
    </lineage>
</organism>
<sequence>MAHKKGGGSSRNGRDSESKRLGVKAYGDQFVSAGSIIVRQRGTKVHPGLNVGRGGDDTLFAKVDGRVRFGRSRGRSVVSVVREAPA</sequence>
<evidence type="ECO:0000255" key="1">
    <source>
        <dbReference type="HAMAP-Rule" id="MF_00539"/>
    </source>
</evidence>
<evidence type="ECO:0000256" key="2">
    <source>
        <dbReference type="SAM" id="MobiDB-lite"/>
    </source>
</evidence>
<evidence type="ECO:0000305" key="3"/>
<dbReference type="EMBL" id="CP000386">
    <property type="protein sequence ID" value="ABG04486.1"/>
    <property type="molecule type" value="Genomic_DNA"/>
</dbReference>
<dbReference type="RefSeq" id="WP_011564503.1">
    <property type="nucleotide sequence ID" value="NC_008148.1"/>
</dbReference>
<dbReference type="SMR" id="Q1AVU2"/>
<dbReference type="STRING" id="266117.Rxyl_1524"/>
<dbReference type="KEGG" id="rxy:Rxyl_1524"/>
<dbReference type="eggNOG" id="COG0211">
    <property type="taxonomic scope" value="Bacteria"/>
</dbReference>
<dbReference type="HOGENOM" id="CLU_095424_4_1_11"/>
<dbReference type="OrthoDB" id="9803474at2"/>
<dbReference type="PhylomeDB" id="Q1AVU2"/>
<dbReference type="Proteomes" id="UP000006637">
    <property type="component" value="Chromosome"/>
</dbReference>
<dbReference type="GO" id="GO:0022625">
    <property type="term" value="C:cytosolic large ribosomal subunit"/>
    <property type="evidence" value="ECO:0007669"/>
    <property type="project" value="TreeGrafter"/>
</dbReference>
<dbReference type="GO" id="GO:0003735">
    <property type="term" value="F:structural constituent of ribosome"/>
    <property type="evidence" value="ECO:0007669"/>
    <property type="project" value="InterPro"/>
</dbReference>
<dbReference type="GO" id="GO:0006412">
    <property type="term" value="P:translation"/>
    <property type="evidence" value="ECO:0007669"/>
    <property type="project" value="UniProtKB-UniRule"/>
</dbReference>
<dbReference type="FunFam" id="2.40.50.100:FF:000020">
    <property type="entry name" value="50S ribosomal protein L27"/>
    <property type="match status" value="1"/>
</dbReference>
<dbReference type="Gene3D" id="2.40.50.100">
    <property type="match status" value="1"/>
</dbReference>
<dbReference type="HAMAP" id="MF_00539">
    <property type="entry name" value="Ribosomal_bL27"/>
    <property type="match status" value="1"/>
</dbReference>
<dbReference type="InterPro" id="IPR001684">
    <property type="entry name" value="Ribosomal_bL27"/>
</dbReference>
<dbReference type="InterPro" id="IPR018261">
    <property type="entry name" value="Ribosomal_bL27_CS"/>
</dbReference>
<dbReference type="NCBIfam" id="TIGR00062">
    <property type="entry name" value="L27"/>
    <property type="match status" value="1"/>
</dbReference>
<dbReference type="PANTHER" id="PTHR15893:SF0">
    <property type="entry name" value="LARGE RIBOSOMAL SUBUNIT PROTEIN BL27M"/>
    <property type="match status" value="1"/>
</dbReference>
<dbReference type="PANTHER" id="PTHR15893">
    <property type="entry name" value="RIBOSOMAL PROTEIN L27"/>
    <property type="match status" value="1"/>
</dbReference>
<dbReference type="Pfam" id="PF01016">
    <property type="entry name" value="Ribosomal_L27"/>
    <property type="match status" value="1"/>
</dbReference>
<dbReference type="PRINTS" id="PR00063">
    <property type="entry name" value="RIBOSOMALL27"/>
</dbReference>
<dbReference type="SUPFAM" id="SSF110324">
    <property type="entry name" value="Ribosomal L27 protein-like"/>
    <property type="match status" value="1"/>
</dbReference>
<dbReference type="PROSITE" id="PS00831">
    <property type="entry name" value="RIBOSOMAL_L27"/>
    <property type="match status" value="1"/>
</dbReference>